<name>HSLV_ECOHS</name>
<evidence type="ECO:0000255" key="1">
    <source>
        <dbReference type="HAMAP-Rule" id="MF_00248"/>
    </source>
</evidence>
<dbReference type="EC" id="3.4.25.2" evidence="1"/>
<dbReference type="EMBL" id="CP000802">
    <property type="protein sequence ID" value="ABV08342.1"/>
    <property type="molecule type" value="Genomic_DNA"/>
</dbReference>
<dbReference type="RefSeq" id="WP_000208242.1">
    <property type="nucleotide sequence ID" value="NC_009800.1"/>
</dbReference>
<dbReference type="SMR" id="A8A738"/>
<dbReference type="MEROPS" id="T01.006"/>
<dbReference type="GeneID" id="93777966"/>
<dbReference type="KEGG" id="ecx:EcHS_A4164"/>
<dbReference type="HOGENOM" id="CLU_093872_1_0_6"/>
<dbReference type="GO" id="GO:0009376">
    <property type="term" value="C:HslUV protease complex"/>
    <property type="evidence" value="ECO:0007669"/>
    <property type="project" value="UniProtKB-UniRule"/>
</dbReference>
<dbReference type="GO" id="GO:0005839">
    <property type="term" value="C:proteasome core complex"/>
    <property type="evidence" value="ECO:0007669"/>
    <property type="project" value="InterPro"/>
</dbReference>
<dbReference type="GO" id="GO:0046872">
    <property type="term" value="F:metal ion binding"/>
    <property type="evidence" value="ECO:0007669"/>
    <property type="project" value="UniProtKB-KW"/>
</dbReference>
<dbReference type="GO" id="GO:0004298">
    <property type="term" value="F:threonine-type endopeptidase activity"/>
    <property type="evidence" value="ECO:0007669"/>
    <property type="project" value="UniProtKB-KW"/>
</dbReference>
<dbReference type="GO" id="GO:0051603">
    <property type="term" value="P:proteolysis involved in protein catabolic process"/>
    <property type="evidence" value="ECO:0007669"/>
    <property type="project" value="InterPro"/>
</dbReference>
<dbReference type="CDD" id="cd01913">
    <property type="entry name" value="protease_HslV"/>
    <property type="match status" value="1"/>
</dbReference>
<dbReference type="FunFam" id="3.60.20.10:FF:000002">
    <property type="entry name" value="ATP-dependent protease subunit HslV"/>
    <property type="match status" value="1"/>
</dbReference>
<dbReference type="Gene3D" id="3.60.20.10">
    <property type="entry name" value="Glutamine Phosphoribosylpyrophosphate, subunit 1, domain 1"/>
    <property type="match status" value="1"/>
</dbReference>
<dbReference type="HAMAP" id="MF_00248">
    <property type="entry name" value="HslV"/>
    <property type="match status" value="1"/>
</dbReference>
<dbReference type="InterPro" id="IPR022281">
    <property type="entry name" value="ATP-dep_Prtase_HsIV_su"/>
</dbReference>
<dbReference type="InterPro" id="IPR029055">
    <property type="entry name" value="Ntn_hydrolases_N"/>
</dbReference>
<dbReference type="InterPro" id="IPR001353">
    <property type="entry name" value="Proteasome_sua/b"/>
</dbReference>
<dbReference type="InterPro" id="IPR023333">
    <property type="entry name" value="Proteasome_suB-type"/>
</dbReference>
<dbReference type="NCBIfam" id="TIGR03692">
    <property type="entry name" value="ATP_dep_HslV"/>
    <property type="match status" value="1"/>
</dbReference>
<dbReference type="NCBIfam" id="NF003964">
    <property type="entry name" value="PRK05456.1"/>
    <property type="match status" value="1"/>
</dbReference>
<dbReference type="PANTHER" id="PTHR32194:SF0">
    <property type="entry name" value="ATP-DEPENDENT PROTEASE SUBUNIT HSLV"/>
    <property type="match status" value="1"/>
</dbReference>
<dbReference type="PANTHER" id="PTHR32194">
    <property type="entry name" value="METALLOPROTEASE TLDD"/>
    <property type="match status" value="1"/>
</dbReference>
<dbReference type="Pfam" id="PF00227">
    <property type="entry name" value="Proteasome"/>
    <property type="match status" value="1"/>
</dbReference>
<dbReference type="PIRSF" id="PIRSF039093">
    <property type="entry name" value="HslV"/>
    <property type="match status" value="1"/>
</dbReference>
<dbReference type="SUPFAM" id="SSF56235">
    <property type="entry name" value="N-terminal nucleophile aminohydrolases (Ntn hydrolases)"/>
    <property type="match status" value="1"/>
</dbReference>
<dbReference type="PROSITE" id="PS51476">
    <property type="entry name" value="PROTEASOME_BETA_2"/>
    <property type="match status" value="1"/>
</dbReference>
<keyword id="KW-0021">Allosteric enzyme</keyword>
<keyword id="KW-0963">Cytoplasm</keyword>
<keyword id="KW-0378">Hydrolase</keyword>
<keyword id="KW-0479">Metal-binding</keyword>
<keyword id="KW-0645">Protease</keyword>
<keyword id="KW-0915">Sodium</keyword>
<keyword id="KW-0346">Stress response</keyword>
<keyword id="KW-0888">Threonine protease</keyword>
<gene>
    <name evidence="1" type="primary">hslV</name>
    <name type="ordered locus">EcHS_A4164</name>
</gene>
<accession>A8A738</accession>
<comment type="function">
    <text evidence="1">Protease subunit of a proteasome-like degradation complex believed to be a general protein degrading machinery.</text>
</comment>
<comment type="catalytic activity">
    <reaction evidence="1">
        <text>ATP-dependent cleavage of peptide bonds with broad specificity.</text>
        <dbReference type="EC" id="3.4.25.2"/>
    </reaction>
</comment>
<comment type="activity regulation">
    <text evidence="1">Allosterically activated by HslU binding.</text>
</comment>
<comment type="subunit">
    <text evidence="1">A double ring-shaped homohexamer of HslV is capped on each side by a ring-shaped HslU homohexamer. The assembly of the HslU/HslV complex is dependent on binding of ATP.</text>
</comment>
<comment type="subcellular location">
    <subcellularLocation>
        <location evidence="1">Cytoplasm</location>
    </subcellularLocation>
</comment>
<comment type="induction">
    <text evidence="1">By heat shock.</text>
</comment>
<comment type="similarity">
    <text evidence="1">Belongs to the peptidase T1B family. HslV subfamily.</text>
</comment>
<proteinExistence type="inferred from homology"/>
<protein>
    <recommendedName>
        <fullName evidence="1">ATP-dependent protease subunit HslV</fullName>
        <ecNumber evidence="1">3.4.25.2</ecNumber>
    </recommendedName>
    <alternativeName>
        <fullName evidence="1">Heat shock protein HslV</fullName>
    </alternativeName>
</protein>
<sequence>MTTIVSVRRNGHVVIAGDGQATLGNTVMKGNVKKVRRLYNDKVIAGFAGGTADAFTLFELFERKLEMHQGHLVKAAVELAKDWRTDRMLRKLEALLAVADETASLIITGNGDVVQPENDLIAIGSGGPYAQAAARALLENTELSAREIAEKALDIAGDICIYTNHFHTIEELSYKA</sequence>
<organism>
    <name type="scientific">Escherichia coli O9:H4 (strain HS)</name>
    <dbReference type="NCBI Taxonomy" id="331112"/>
    <lineage>
        <taxon>Bacteria</taxon>
        <taxon>Pseudomonadati</taxon>
        <taxon>Pseudomonadota</taxon>
        <taxon>Gammaproteobacteria</taxon>
        <taxon>Enterobacterales</taxon>
        <taxon>Enterobacteriaceae</taxon>
        <taxon>Escherichia</taxon>
    </lineage>
</organism>
<feature type="chain" id="PRO_1000059016" description="ATP-dependent protease subunit HslV">
    <location>
        <begin position="1"/>
        <end position="176"/>
    </location>
</feature>
<feature type="active site" evidence="1">
    <location>
        <position position="2"/>
    </location>
</feature>
<feature type="binding site" evidence="1">
    <location>
        <position position="157"/>
    </location>
    <ligand>
        <name>Na(+)</name>
        <dbReference type="ChEBI" id="CHEBI:29101"/>
    </ligand>
</feature>
<feature type="binding site" evidence="1">
    <location>
        <position position="160"/>
    </location>
    <ligand>
        <name>Na(+)</name>
        <dbReference type="ChEBI" id="CHEBI:29101"/>
    </ligand>
</feature>
<feature type="binding site" evidence="1">
    <location>
        <position position="163"/>
    </location>
    <ligand>
        <name>Na(+)</name>
        <dbReference type="ChEBI" id="CHEBI:29101"/>
    </ligand>
</feature>
<reference key="1">
    <citation type="journal article" date="2008" name="J. Bacteriol.">
        <title>The pangenome structure of Escherichia coli: comparative genomic analysis of E. coli commensal and pathogenic isolates.</title>
        <authorList>
            <person name="Rasko D.A."/>
            <person name="Rosovitz M.J."/>
            <person name="Myers G.S.A."/>
            <person name="Mongodin E.F."/>
            <person name="Fricke W.F."/>
            <person name="Gajer P."/>
            <person name="Crabtree J."/>
            <person name="Sebaihia M."/>
            <person name="Thomson N.R."/>
            <person name="Chaudhuri R."/>
            <person name="Henderson I.R."/>
            <person name="Sperandio V."/>
            <person name="Ravel J."/>
        </authorList>
    </citation>
    <scope>NUCLEOTIDE SEQUENCE [LARGE SCALE GENOMIC DNA]</scope>
    <source>
        <strain>HS</strain>
    </source>
</reference>